<reference key="1">
    <citation type="journal article" date="1994" name="Genes Dev.">
        <title>Functional domains within FEN-1 and RAD2 define a family of structure-specific endonucleases: implications for nucleotide excision repair.</title>
        <authorList>
            <person name="Harrington J.J."/>
            <person name="Lieber M.R."/>
        </authorList>
    </citation>
    <scope>NUCLEOTIDE SEQUENCE [MRNA]</scope>
    <scope>PROTEIN SEQUENCE OF 260-275 AND 331-352</scope>
    <scope>FUNCTION</scope>
    <source>
        <strain>BALB/cJ</strain>
    </source>
</reference>
<reference key="2">
    <citation type="journal article" date="2010" name="Cell">
        <title>A tissue-specific atlas of mouse protein phosphorylation and expression.</title>
        <authorList>
            <person name="Huttlin E.L."/>
            <person name="Jedrychowski M.P."/>
            <person name="Elias J.E."/>
            <person name="Goswami T."/>
            <person name="Rad R."/>
            <person name="Beausoleil S.A."/>
            <person name="Villen J."/>
            <person name="Haas W."/>
            <person name="Sowa M.E."/>
            <person name="Gygi S.P."/>
        </authorList>
    </citation>
    <scope>IDENTIFICATION BY MASS SPECTROMETRY [LARGE SCALE ANALYSIS]</scope>
    <source>
        <tissue>Kidney</tissue>
        <tissue>Lung</tissue>
        <tissue>Pancreas</tissue>
        <tissue>Spleen</tissue>
        <tissue>Testis</tissue>
    </source>
</reference>
<reference key="3">
    <citation type="journal article" date="2013" name="Mol. Cell">
        <title>SIRT5-mediated lysine desuccinylation impacts diverse metabolic pathways.</title>
        <authorList>
            <person name="Park J."/>
            <person name="Chen Y."/>
            <person name="Tishkoff D.X."/>
            <person name="Peng C."/>
            <person name="Tan M."/>
            <person name="Dai L."/>
            <person name="Xie Z."/>
            <person name="Zhang Y."/>
            <person name="Zwaans B.M."/>
            <person name="Skinner M.E."/>
            <person name="Lombard D.B."/>
            <person name="Zhao Y."/>
        </authorList>
    </citation>
    <scope>ACETYLATION [LARGE SCALE ANALYSIS] AT LYS-373</scope>
    <scope>IDENTIFICATION BY MASS SPECTROMETRY [LARGE SCALE ANALYSIS]</scope>
    <source>
        <tissue>Embryonic fibroblast</tissue>
    </source>
</reference>
<comment type="function">
    <text evidence="2 4">Structure-specific nuclease with 5'-flap endonuclease and 5'-3' exonuclease activities involved in DNA replication and repair. During DNA replication, cleaves the 5'-overhanging flap structure that is generated by displacement synthesis when DNA polymerase encounters the 5'-end of a downstream Okazaki fragment. It enters the flap from the 5'-end and then tracks to cleave the flap base, leaving a nick for ligation. Also involved in the long patch base excision repair (LP-BER) pathway, by cleaving within the apurinic/apyrimidinic (AP) site-terminated flap. Acts as a genome stabilization factor that prevents flaps from equilibrating into structures that lead to duplications and deletions. Also possesses 5'-3' exonuclease activity on nicked or gapped double-stranded DNA, and exhibits RNase H activity. Also involved in replication and repair of rDNA and in repairing mitochondrial DNA.</text>
</comment>
<comment type="cofactor">
    <cofactor evidence="2">
        <name>Mg(2+)</name>
        <dbReference type="ChEBI" id="CHEBI:18420"/>
    </cofactor>
    <text evidence="2">Binds 2 magnesium ions per subunit. They probably participate in the reaction catalyzed by the enzyme. May bind an additional third magnesium ion after substrate binding.</text>
</comment>
<comment type="subunit">
    <text evidence="1 2">Interacts with PCNA. Three molecules of FEN1 bind to one PCNA trimer with each molecule binding to one PCNA monomer. PCNA stimulates the nuclease activity without altering cleavage specificity. The C-terminal domain binds EP300; can bind simultaneously to both PCNA and EP300. Interacts with DDX11; this interaction is direct and increases flap endonuclease activity of FEN1. Interacts with WDR4; regulating its endonuclease activity. Interacts with POLB.</text>
</comment>
<comment type="subcellular location">
    <subcellularLocation>
        <location evidence="2">Nucleus</location>
        <location evidence="2">Nucleolus</location>
    </subcellularLocation>
    <subcellularLocation>
        <location evidence="2">Nucleus</location>
        <location evidence="2">Nucleoplasm</location>
    </subcellularLocation>
    <subcellularLocation>
        <location>Mitochondrion</location>
    </subcellularLocation>
    <text evidence="2">Resides mostly in the nucleoli and relocalizes to the nucleoplasm upon DNA damage.</text>
</comment>
<comment type="PTM">
    <text evidence="2">Acetylated by EP300. Acetylation inhibits both endonuclease and exonuclease activity. Acetylation also reduces DNA-binding activity but does not affect interaction with PCNA or EP300.</text>
</comment>
<comment type="PTM">
    <text evidence="2">Phosphorylation upon DNA damage induces relocalization to the nuclear plasma. Phosphorylation at Ser-185 by CDK2 occurs during late S-phase and results in dissociation from PCNA.</text>
</comment>
<comment type="PTM">
    <text evidence="2">Methylation at Arg-190 by PRMT5 impedes Ser-185 phosphorylation and increases interaction with PCNA.</text>
</comment>
<comment type="similarity">
    <text evidence="2">Belongs to the XPG/RAD2 endonuclease family. FEN1 subfamily.</text>
</comment>
<sequence>MGIHGLAKLIADVAPSAIRENDIKSYFGRKVAIDASMSIYQFLIAVRQGGDVLQNEEGETTSLMGMFYRTIRMENGIKPVYVFDGKPPQLKSGELAKRSERRAEAEKQLQQAQEAGMEEEVEKFTKRLVKVTKQHNDECKHLLSLMGIPYLDAPSEAEASCAALAKAGKVYAAATEDMDCLTFGSPVLMRHLTASEAKKLPIQEFHLSRVLQELGLNQEQFVDLCILLGSDYCESIRGIGAKRAVDLIQKHKSIEEIVRRLDPSKYPVPENWLHKEAQQLFLEPEVVDPESVELKWSEPNEEELVKFMCGEKQFSEERIRSGVKRLSKSRQGSTQGRLDDFFKVTGSLSSAKRKEPEPKGPAKKKAKTGGAGKFRRGK</sequence>
<feature type="chain" id="PRO_0000154070" description="Flap endonuclease 1">
    <location>
        <begin position="1"/>
        <end position="378"/>
    </location>
</feature>
<feature type="region of interest" description="N-domain">
    <location>
        <begin position="1"/>
        <end position="102"/>
    </location>
</feature>
<feature type="region of interest" description="I-domain">
    <location>
        <begin position="120"/>
        <end position="251"/>
    </location>
</feature>
<feature type="region of interest" description="Disordered" evidence="3">
    <location>
        <begin position="325"/>
        <end position="378"/>
    </location>
</feature>
<feature type="region of interest" description="Interaction with PCNA" evidence="2">
    <location>
        <begin position="334"/>
        <end position="342"/>
    </location>
</feature>
<feature type="compositionally biased region" description="Basic residues" evidence="3">
    <location>
        <begin position="361"/>
        <end position="378"/>
    </location>
</feature>
<feature type="binding site" evidence="2">
    <location>
        <position position="34"/>
    </location>
    <ligand>
        <name>Mg(2+)</name>
        <dbReference type="ChEBI" id="CHEBI:18420"/>
        <label>1</label>
    </ligand>
</feature>
<feature type="binding site" evidence="2">
    <location>
        <position position="47"/>
    </location>
    <ligand>
        <name>DNA</name>
        <dbReference type="ChEBI" id="CHEBI:16991"/>
    </ligand>
</feature>
<feature type="binding site" evidence="2">
    <location>
        <position position="69"/>
    </location>
    <ligand>
        <name>DNA</name>
        <dbReference type="ChEBI" id="CHEBI:16991"/>
    </ligand>
</feature>
<feature type="binding site" evidence="2">
    <location>
        <position position="84"/>
    </location>
    <ligand>
        <name>Mg(2+)</name>
        <dbReference type="ChEBI" id="CHEBI:18420"/>
        <label>1</label>
    </ligand>
</feature>
<feature type="binding site" evidence="2">
    <location>
        <position position="156"/>
    </location>
    <ligand>
        <name>DNA</name>
        <dbReference type="ChEBI" id="CHEBI:16991"/>
    </ligand>
</feature>
<feature type="binding site" evidence="2">
    <location>
        <position position="156"/>
    </location>
    <ligand>
        <name>Mg(2+)</name>
        <dbReference type="ChEBI" id="CHEBI:18420"/>
        <label>1</label>
    </ligand>
</feature>
<feature type="binding site" evidence="2">
    <location>
        <position position="158"/>
    </location>
    <ligand>
        <name>Mg(2+)</name>
        <dbReference type="ChEBI" id="CHEBI:18420"/>
        <label>1</label>
    </ligand>
</feature>
<feature type="binding site" evidence="2">
    <location>
        <position position="177"/>
    </location>
    <ligand>
        <name>Mg(2+)</name>
        <dbReference type="ChEBI" id="CHEBI:18420"/>
        <label>2</label>
    </ligand>
</feature>
<feature type="binding site" evidence="2">
    <location>
        <position position="179"/>
    </location>
    <ligand>
        <name>Mg(2+)</name>
        <dbReference type="ChEBI" id="CHEBI:18420"/>
        <label>2</label>
    </ligand>
</feature>
<feature type="binding site" evidence="2">
    <location>
        <position position="229"/>
    </location>
    <ligand>
        <name>DNA</name>
        <dbReference type="ChEBI" id="CHEBI:16991"/>
    </ligand>
</feature>
<feature type="binding site" evidence="2">
    <location>
        <position position="231"/>
    </location>
    <ligand>
        <name>DNA</name>
        <dbReference type="ChEBI" id="CHEBI:16991"/>
    </ligand>
</feature>
<feature type="binding site" evidence="2">
    <location>
        <position position="231"/>
    </location>
    <ligand>
        <name>Mg(2+)</name>
        <dbReference type="ChEBI" id="CHEBI:18420"/>
        <label>2</label>
    </ligand>
</feature>
<feature type="modified residue" description="Symmetric dimethylarginine; by PRMT5" evidence="1 2">
    <location>
        <position position="19"/>
    </location>
</feature>
<feature type="modified residue" description="N6-acetyllysine" evidence="1 2">
    <location>
        <position position="78"/>
    </location>
</feature>
<feature type="modified residue" description="Symmetric dimethylarginine; by PRMT5" evidence="1 2">
    <location>
        <position position="98"/>
    </location>
</feature>
<feature type="modified residue" description="Symmetric dimethylarginine; by PRMT5" evidence="1 2">
    <location>
        <position position="102"/>
    </location>
</feature>
<feature type="modified residue" description="Phosphoserine; by CDK2" evidence="1 2">
    <location>
        <position position="185"/>
    </location>
</feature>
<feature type="modified residue" description="Symmetric dimethylarginine; by PRMT5" evidence="1 2">
    <location>
        <position position="190"/>
    </location>
</feature>
<feature type="modified residue" description="Phosphoserine" evidence="1">
    <location>
        <position position="195"/>
    </location>
</feature>
<feature type="modified residue" description="Phosphoserine" evidence="1">
    <location>
        <position position="253"/>
    </location>
</feature>
<feature type="modified residue" description="Phosphoserine" evidence="1">
    <location>
        <position position="291"/>
    </location>
</feature>
<feature type="modified residue" description="Phosphoserine" evidence="1">
    <location>
        <position position="333"/>
    </location>
</feature>
<feature type="modified residue" description="Phosphothreonine" evidence="1">
    <location>
        <position position="334"/>
    </location>
</feature>
<feature type="modified residue" description="N6-acetyllysine" evidence="1 2">
    <location>
        <position position="352"/>
    </location>
</feature>
<feature type="modified residue" description="N6-acetyllysine" evidence="5">
    <location>
        <position position="373"/>
    </location>
</feature>
<feature type="modified residue" description="N6-acetyllysine" evidence="1 2">
    <location>
        <position position="378"/>
    </location>
</feature>
<name>FEN1_MOUSE</name>
<proteinExistence type="evidence at protein level"/>
<gene>
    <name evidence="2" type="primary">Fen1</name>
    <name type="synonym">Fen-1</name>
</gene>
<accession>P39749</accession>
<organism>
    <name type="scientific">Mus musculus</name>
    <name type="common">Mouse</name>
    <dbReference type="NCBI Taxonomy" id="10090"/>
    <lineage>
        <taxon>Eukaryota</taxon>
        <taxon>Metazoa</taxon>
        <taxon>Chordata</taxon>
        <taxon>Craniata</taxon>
        <taxon>Vertebrata</taxon>
        <taxon>Euteleostomi</taxon>
        <taxon>Mammalia</taxon>
        <taxon>Eutheria</taxon>
        <taxon>Euarchontoglires</taxon>
        <taxon>Glires</taxon>
        <taxon>Rodentia</taxon>
        <taxon>Myomorpha</taxon>
        <taxon>Muroidea</taxon>
        <taxon>Muridae</taxon>
        <taxon>Murinae</taxon>
        <taxon>Mus</taxon>
        <taxon>Mus</taxon>
    </lineage>
</organism>
<protein>
    <recommendedName>
        <fullName evidence="2">Flap endonuclease 1</fullName>
        <shortName evidence="2">FEN-1</shortName>
        <ecNumber evidence="2">3.1.-.-</ecNumber>
    </recommendedName>
    <alternativeName>
        <fullName evidence="2">Flap structure-specific endonuclease 1</fullName>
    </alternativeName>
</protein>
<dbReference type="EC" id="3.1.-.-" evidence="2"/>
<dbReference type="EMBL" id="L26320">
    <property type="protein sequence ID" value="AAC37664.1"/>
    <property type="molecule type" value="mRNA"/>
</dbReference>
<dbReference type="PIR" id="A53730">
    <property type="entry name" value="A53730"/>
</dbReference>
<dbReference type="SMR" id="P39749"/>
<dbReference type="FunCoup" id="P39749">
    <property type="interactions" value="3060"/>
</dbReference>
<dbReference type="IntAct" id="P39749">
    <property type="interactions" value="2"/>
</dbReference>
<dbReference type="STRING" id="10090.ENSMUSP00000117246"/>
<dbReference type="iPTMnet" id="P39749"/>
<dbReference type="PhosphoSitePlus" id="P39749"/>
<dbReference type="jPOST" id="P39749"/>
<dbReference type="PaxDb" id="10090-ENSMUSP00000025651"/>
<dbReference type="PeptideAtlas" id="P39749"/>
<dbReference type="ProteomicsDB" id="270981"/>
<dbReference type="Pumba" id="P39749"/>
<dbReference type="AGR" id="MGI:102779"/>
<dbReference type="MGI" id="MGI:102779">
    <property type="gene designation" value="Fen1"/>
</dbReference>
<dbReference type="eggNOG" id="KOG2519">
    <property type="taxonomic scope" value="Eukaryota"/>
</dbReference>
<dbReference type="InParanoid" id="P39749"/>
<dbReference type="Reactome" id="R-MMU-110362">
    <property type="pathway name" value="POLB-Dependent Long Patch Base Excision Repair"/>
</dbReference>
<dbReference type="Reactome" id="R-MMU-174437">
    <property type="pathway name" value="Removal of the Flap Intermediate from the C-strand"/>
</dbReference>
<dbReference type="Reactome" id="R-MMU-5651801">
    <property type="pathway name" value="PCNA-Dependent Long Patch Base Excision Repair"/>
</dbReference>
<dbReference type="Reactome" id="R-MMU-5685939">
    <property type="pathway name" value="HDR through MMEJ (alt-NHEJ)"/>
</dbReference>
<dbReference type="Reactome" id="R-MMU-69166">
    <property type="pathway name" value="Removal of the Flap Intermediate"/>
</dbReference>
<dbReference type="ChiTaRS" id="Fen1">
    <property type="organism name" value="mouse"/>
</dbReference>
<dbReference type="PRO" id="PR:P39749"/>
<dbReference type="Proteomes" id="UP000000589">
    <property type="component" value="Unplaced"/>
</dbReference>
<dbReference type="RNAct" id="P39749">
    <property type="molecule type" value="protein"/>
</dbReference>
<dbReference type="GO" id="GO:0005739">
    <property type="term" value="C:mitochondrion"/>
    <property type="evidence" value="ECO:0007669"/>
    <property type="project" value="UniProtKB-SubCell"/>
</dbReference>
<dbReference type="GO" id="GO:0005730">
    <property type="term" value="C:nucleolus"/>
    <property type="evidence" value="ECO:0007669"/>
    <property type="project" value="UniProtKB-SubCell"/>
</dbReference>
<dbReference type="GO" id="GO:0005654">
    <property type="term" value="C:nucleoplasm"/>
    <property type="evidence" value="ECO:0007669"/>
    <property type="project" value="UniProtKB-SubCell"/>
</dbReference>
<dbReference type="GO" id="GO:0005634">
    <property type="term" value="C:nucleus"/>
    <property type="evidence" value="ECO:0000250"/>
    <property type="project" value="UniProtKB"/>
</dbReference>
<dbReference type="GO" id="GO:0032991">
    <property type="term" value="C:protein-containing complex"/>
    <property type="evidence" value="ECO:0000266"/>
    <property type="project" value="MGI"/>
</dbReference>
<dbReference type="GO" id="GO:0008409">
    <property type="term" value="F:5'-3' exonuclease activity"/>
    <property type="evidence" value="ECO:0007669"/>
    <property type="project" value="UniProtKB-UniRule"/>
</dbReference>
<dbReference type="GO" id="GO:0017108">
    <property type="term" value="F:5'-flap endonuclease activity"/>
    <property type="evidence" value="ECO:0007669"/>
    <property type="project" value="UniProtKB-UniRule"/>
</dbReference>
<dbReference type="GO" id="GO:0003677">
    <property type="term" value="F:DNA binding"/>
    <property type="evidence" value="ECO:0000314"/>
    <property type="project" value="MGI"/>
</dbReference>
<dbReference type="GO" id="GO:0004527">
    <property type="term" value="F:exonuclease activity"/>
    <property type="evidence" value="ECO:0000314"/>
    <property type="project" value="MGI"/>
</dbReference>
<dbReference type="GO" id="GO:0048256">
    <property type="term" value="F:flap endonuclease activity"/>
    <property type="evidence" value="ECO:0000314"/>
    <property type="project" value="MGI"/>
</dbReference>
<dbReference type="GO" id="GO:0000287">
    <property type="term" value="F:magnesium ion binding"/>
    <property type="evidence" value="ECO:0000314"/>
    <property type="project" value="MGI"/>
</dbReference>
<dbReference type="GO" id="GO:0030145">
    <property type="term" value="F:manganese ion binding"/>
    <property type="evidence" value="ECO:0000314"/>
    <property type="project" value="MGI"/>
</dbReference>
<dbReference type="GO" id="GO:0006284">
    <property type="term" value="P:base-excision repair"/>
    <property type="evidence" value="ECO:0007669"/>
    <property type="project" value="UniProtKB-UniRule"/>
</dbReference>
<dbReference type="GO" id="GO:0006281">
    <property type="term" value="P:DNA repair"/>
    <property type="evidence" value="ECO:0000315"/>
    <property type="project" value="MGI"/>
</dbReference>
<dbReference type="GO" id="GO:0006260">
    <property type="term" value="P:DNA replication"/>
    <property type="evidence" value="ECO:0000315"/>
    <property type="project" value="MGI"/>
</dbReference>
<dbReference type="GO" id="GO:0043137">
    <property type="term" value="P:DNA replication, removal of RNA primer"/>
    <property type="evidence" value="ECO:0007669"/>
    <property type="project" value="UniProtKB-UniRule"/>
</dbReference>
<dbReference type="CDD" id="cd09907">
    <property type="entry name" value="H3TH_FEN1-Euk"/>
    <property type="match status" value="1"/>
</dbReference>
<dbReference type="CDD" id="cd09867">
    <property type="entry name" value="PIN_FEN1"/>
    <property type="match status" value="1"/>
</dbReference>
<dbReference type="FunFam" id="1.10.150.20:FF:000009">
    <property type="entry name" value="Flap endonuclease 1"/>
    <property type="match status" value="1"/>
</dbReference>
<dbReference type="FunFam" id="3.40.50.1010:FF:000003">
    <property type="entry name" value="Flap endonuclease 1"/>
    <property type="match status" value="1"/>
</dbReference>
<dbReference type="Gene3D" id="1.10.150.20">
    <property type="entry name" value="5' to 3' exonuclease, C-terminal subdomain"/>
    <property type="match status" value="1"/>
</dbReference>
<dbReference type="Gene3D" id="3.40.50.1010">
    <property type="entry name" value="5'-nuclease"/>
    <property type="match status" value="1"/>
</dbReference>
<dbReference type="HAMAP" id="MF_00614">
    <property type="entry name" value="Fen"/>
    <property type="match status" value="1"/>
</dbReference>
<dbReference type="InterPro" id="IPR036279">
    <property type="entry name" value="5-3_exonuclease_C_sf"/>
</dbReference>
<dbReference type="InterPro" id="IPR023426">
    <property type="entry name" value="Flap_endonuc"/>
</dbReference>
<dbReference type="InterPro" id="IPR008918">
    <property type="entry name" value="HhH2"/>
</dbReference>
<dbReference type="InterPro" id="IPR029060">
    <property type="entry name" value="PIN-like_dom_sf"/>
</dbReference>
<dbReference type="InterPro" id="IPR006086">
    <property type="entry name" value="XPG-I_dom"/>
</dbReference>
<dbReference type="InterPro" id="IPR006084">
    <property type="entry name" value="XPG/Rad2"/>
</dbReference>
<dbReference type="InterPro" id="IPR019974">
    <property type="entry name" value="XPG_CS"/>
</dbReference>
<dbReference type="InterPro" id="IPR006085">
    <property type="entry name" value="XPG_DNA_repair_N"/>
</dbReference>
<dbReference type="PANTHER" id="PTHR11081:SF9">
    <property type="entry name" value="FLAP ENDONUCLEASE 1"/>
    <property type="match status" value="1"/>
</dbReference>
<dbReference type="PANTHER" id="PTHR11081">
    <property type="entry name" value="FLAP ENDONUCLEASE FAMILY MEMBER"/>
    <property type="match status" value="1"/>
</dbReference>
<dbReference type="Pfam" id="PF00867">
    <property type="entry name" value="XPG_I"/>
    <property type="match status" value="1"/>
</dbReference>
<dbReference type="Pfam" id="PF00752">
    <property type="entry name" value="XPG_N"/>
    <property type="match status" value="1"/>
</dbReference>
<dbReference type="PRINTS" id="PR00853">
    <property type="entry name" value="XPGRADSUPER"/>
</dbReference>
<dbReference type="SMART" id="SM00279">
    <property type="entry name" value="HhH2"/>
    <property type="match status" value="1"/>
</dbReference>
<dbReference type="SMART" id="SM00484">
    <property type="entry name" value="XPGI"/>
    <property type="match status" value="1"/>
</dbReference>
<dbReference type="SMART" id="SM00485">
    <property type="entry name" value="XPGN"/>
    <property type="match status" value="1"/>
</dbReference>
<dbReference type="SUPFAM" id="SSF47807">
    <property type="entry name" value="5' to 3' exonuclease, C-terminal subdomain"/>
    <property type="match status" value="1"/>
</dbReference>
<dbReference type="SUPFAM" id="SSF88723">
    <property type="entry name" value="PIN domain-like"/>
    <property type="match status" value="1"/>
</dbReference>
<dbReference type="PROSITE" id="PS00841">
    <property type="entry name" value="XPG_1"/>
    <property type="match status" value="1"/>
</dbReference>
<dbReference type="PROSITE" id="PS00842">
    <property type="entry name" value="XPG_2"/>
    <property type="match status" value="1"/>
</dbReference>
<keyword id="KW-0007">Acetylation</keyword>
<keyword id="KW-0903">Direct protein sequencing</keyword>
<keyword id="KW-0227">DNA damage</keyword>
<keyword id="KW-0234">DNA repair</keyword>
<keyword id="KW-0235">DNA replication</keyword>
<keyword id="KW-0255">Endonuclease</keyword>
<keyword id="KW-0269">Exonuclease</keyword>
<keyword id="KW-0378">Hydrolase</keyword>
<keyword id="KW-0460">Magnesium</keyword>
<keyword id="KW-0479">Metal-binding</keyword>
<keyword id="KW-0488">Methylation</keyword>
<keyword id="KW-0496">Mitochondrion</keyword>
<keyword id="KW-0540">Nuclease</keyword>
<keyword id="KW-0539">Nucleus</keyword>
<keyword id="KW-0597">Phosphoprotein</keyword>
<keyword id="KW-1185">Reference proteome</keyword>
<evidence type="ECO:0000250" key="1">
    <source>
        <dbReference type="UniProtKB" id="P39748"/>
    </source>
</evidence>
<evidence type="ECO:0000255" key="2">
    <source>
        <dbReference type="HAMAP-Rule" id="MF_03140"/>
    </source>
</evidence>
<evidence type="ECO:0000256" key="3">
    <source>
        <dbReference type="SAM" id="MobiDB-lite"/>
    </source>
</evidence>
<evidence type="ECO:0000269" key="4">
    <source>
    </source>
</evidence>
<evidence type="ECO:0007744" key="5">
    <source>
    </source>
</evidence>